<evidence type="ECO:0000250" key="1">
    <source>
        <dbReference type="UniProtKB" id="P9WI31"/>
    </source>
</evidence>
<evidence type="ECO:0000305" key="2"/>
<gene>
    <name type="primary">PPE15</name>
    <name type="ordered locus">MT1068</name>
</gene>
<keyword id="KW-1045">Host mitochondrion</keyword>
<keyword id="KW-1185">Reference proteome</keyword>
<keyword id="KW-0964">Secreted</keyword>
<keyword id="KW-0843">Virulence</keyword>
<accession>P9WI30</accession>
<accession>L0T5J3</accession>
<accession>Q79FT5</accession>
<accession>Q7D8Y7</accession>
<reference key="1">
    <citation type="journal article" date="2002" name="J. Bacteriol.">
        <title>Whole-genome comparison of Mycobacterium tuberculosis clinical and laboratory strains.</title>
        <authorList>
            <person name="Fleischmann R.D."/>
            <person name="Alland D."/>
            <person name="Eisen J.A."/>
            <person name="Carpenter L."/>
            <person name="White O."/>
            <person name="Peterson J.D."/>
            <person name="DeBoy R.T."/>
            <person name="Dodson R.J."/>
            <person name="Gwinn M.L."/>
            <person name="Haft D.H."/>
            <person name="Hickey E.K."/>
            <person name="Kolonay J.F."/>
            <person name="Nelson W.C."/>
            <person name="Umayam L.A."/>
            <person name="Ermolaeva M.D."/>
            <person name="Salzberg S.L."/>
            <person name="Delcher A."/>
            <person name="Utterback T.R."/>
            <person name="Weidman J.F."/>
            <person name="Khouri H.M."/>
            <person name="Gill J."/>
            <person name="Mikula A."/>
            <person name="Bishai W."/>
            <person name="Jacobs W.R. Jr."/>
            <person name="Venter J.C."/>
            <person name="Fraser C.M."/>
        </authorList>
    </citation>
    <scope>NUCLEOTIDE SEQUENCE [LARGE SCALE GENOMIC DNA]</scope>
    <source>
        <strain>CDC 1551 / Oshkosh</strain>
    </source>
</reference>
<organism>
    <name type="scientific">Mycobacterium tuberculosis (strain CDC 1551 / Oshkosh)</name>
    <dbReference type="NCBI Taxonomy" id="83331"/>
    <lineage>
        <taxon>Bacteria</taxon>
        <taxon>Bacillati</taxon>
        <taxon>Actinomycetota</taxon>
        <taxon>Actinomycetes</taxon>
        <taxon>Mycobacteriales</taxon>
        <taxon>Mycobacteriaceae</taxon>
        <taxon>Mycobacterium</taxon>
        <taxon>Mycobacterium tuberculosis complex</taxon>
    </lineage>
</organism>
<dbReference type="EMBL" id="AE000516">
    <property type="protein sequence ID" value="AAK45319.1"/>
    <property type="molecule type" value="Genomic_DNA"/>
</dbReference>
<dbReference type="PIR" id="B70625">
    <property type="entry name" value="B70625"/>
</dbReference>
<dbReference type="RefSeq" id="WP_003405368.1">
    <property type="nucleotide sequence ID" value="NZ_KK341227.1"/>
</dbReference>
<dbReference type="SMR" id="P9WI30"/>
<dbReference type="KEGG" id="mtc:MT1068"/>
<dbReference type="PATRIC" id="fig|83331.31.peg.1147"/>
<dbReference type="HOGENOM" id="CLU_000243_0_0_11"/>
<dbReference type="Proteomes" id="UP000001020">
    <property type="component" value="Chromosome"/>
</dbReference>
<dbReference type="GO" id="GO:0005576">
    <property type="term" value="C:extracellular region"/>
    <property type="evidence" value="ECO:0007669"/>
    <property type="project" value="UniProtKB-SubCell"/>
</dbReference>
<dbReference type="GO" id="GO:0033650">
    <property type="term" value="C:host cell mitochondrion"/>
    <property type="evidence" value="ECO:0007669"/>
    <property type="project" value="UniProtKB-SubCell"/>
</dbReference>
<dbReference type="GO" id="GO:0052572">
    <property type="term" value="P:response to host immune response"/>
    <property type="evidence" value="ECO:0007669"/>
    <property type="project" value="TreeGrafter"/>
</dbReference>
<dbReference type="FunFam" id="1.20.1260.20:FF:000001">
    <property type="entry name" value="PPE family protein PPE41"/>
    <property type="match status" value="1"/>
</dbReference>
<dbReference type="Gene3D" id="1.20.1260.20">
    <property type="entry name" value="PPE superfamily"/>
    <property type="match status" value="1"/>
</dbReference>
<dbReference type="InterPro" id="IPR022171">
    <property type="entry name" value="PPE_C"/>
</dbReference>
<dbReference type="InterPro" id="IPR000030">
    <property type="entry name" value="PPE_dom"/>
</dbReference>
<dbReference type="InterPro" id="IPR038332">
    <property type="entry name" value="PPE_sf"/>
</dbReference>
<dbReference type="PANTHER" id="PTHR46766">
    <property type="entry name" value="GLUTAMINE-RICH PROTEIN 2"/>
    <property type="match status" value="1"/>
</dbReference>
<dbReference type="PANTHER" id="PTHR46766:SF1">
    <property type="entry name" value="GLUTAMINE-RICH PROTEIN 2"/>
    <property type="match status" value="1"/>
</dbReference>
<dbReference type="Pfam" id="PF00823">
    <property type="entry name" value="PPE"/>
    <property type="match status" value="1"/>
</dbReference>
<dbReference type="Pfam" id="PF12484">
    <property type="entry name" value="PPE-SVP"/>
    <property type="match status" value="1"/>
</dbReference>
<dbReference type="SUPFAM" id="SSF140459">
    <property type="entry name" value="PE/PPE dimer-like"/>
    <property type="match status" value="1"/>
</dbReference>
<name>PPE15_MYCTO</name>
<sequence>MDFGALPPEINSARMYAGAGAGPMMAAGAAWNGLAAELGTTAASYESVITRLTTESWMGPASMAMVAAAQPYLAWLTYTAEAAAHAGSQAMASAAAYEAAYAMTVPPEVVAANRALLAALVATNVLGINTPAIMATEALYAEMWAQDALAMYGYAAASGAAGMLQPLSPPSQTTNPGGLAAQSAAVGSAAATAAVNQVSVADLISSLPNAVSGLASPVTSVLDSTGLSGIIADIDALLATPFVANIINSAVNTAAWYVNAAIPTAIFLANALNSGAPVAIAEGAIEAAEGAASAAAAGLADSVTPAGLGASLGEATLVGRLSVPAAWSTAAPATTAGATALEGSGWTVAAEEAGPVTGMMPGMASAAKGTGAYAGPRYGFKPTVMPKQVVV</sequence>
<protein>
    <recommendedName>
        <fullName evidence="2">PPE family protein PPE15</fullName>
    </recommendedName>
</protein>
<feature type="chain" id="PRO_0000428078" description="PPE family protein PPE15">
    <location>
        <begin position="1"/>
        <end position="391"/>
    </location>
</feature>
<feature type="region of interest" description="Eukaryotic-like SH3 domain" evidence="1">
    <location>
        <begin position="312"/>
        <end position="367"/>
    </location>
</feature>
<proteinExistence type="inferred from homology"/>
<comment type="function">
    <text evidence="1">May play a critical role in the homeostasis of triacylglycerol-containing lipid droplets in M.tuberculosis and influence the entry of the pathogen into a dormant state. Is recognized by host TLR4 receptor at the macrophage cell surface, which modulates the host immune response, induces mitochondrial stress and perturbations, and induces macrophage apoptosis leading to pathogen persistence. Also downregulates NOX-mediated reactive oxygen species (ROS) generation in THP1 macrophages, which increases intracellular survival of bacteria. PPE15 interacts with two subunits of the host NADPH oxidase (NOX) complex in the cytosol of macrophages and prevents their migration to the membrane, which inhibits the assembly of the NOX complex at the plasma membrane of THP1 macrophages. This leads to reduced NOX activity and diminished ROS generation.</text>
</comment>
<comment type="subunit">
    <text evidence="1">Forms a heterodimer with PE8. The dimer forms a 1:1:1 heterotrimeric complex with EspG5. PPE15 interacts directly with EspG5. Interacts via the C-terminal region with host Toll-like receptor 4 (TLR4). Interacts, also via the C-terminal region, with two cytosolic subunits of the host NOX complex, p47phox (NCF1) and p67phox (NCF2).</text>
</comment>
<comment type="subcellular location">
    <subcellularLocation>
        <location evidence="1">Secreted</location>
    </subcellularLocation>
    <subcellularLocation>
        <location evidence="1">Host mitochondrion</location>
    </subcellularLocation>
</comment>
<comment type="similarity">
    <text evidence="2">Belongs to the mycobacterial PPE family.</text>
</comment>